<comment type="catalytic activity">
    <reaction>
        <text>L-seryl-[protein] + ATP = O-phospho-L-seryl-[protein] + ADP + H(+)</text>
        <dbReference type="Rhea" id="RHEA:17989"/>
        <dbReference type="Rhea" id="RHEA-COMP:9863"/>
        <dbReference type="Rhea" id="RHEA-COMP:11604"/>
        <dbReference type="ChEBI" id="CHEBI:15378"/>
        <dbReference type="ChEBI" id="CHEBI:29999"/>
        <dbReference type="ChEBI" id="CHEBI:30616"/>
        <dbReference type="ChEBI" id="CHEBI:83421"/>
        <dbReference type="ChEBI" id="CHEBI:456216"/>
        <dbReference type="EC" id="2.7.11.1"/>
    </reaction>
</comment>
<comment type="catalytic activity">
    <reaction>
        <text>L-threonyl-[protein] + ATP = O-phospho-L-threonyl-[protein] + ADP + H(+)</text>
        <dbReference type="Rhea" id="RHEA:46608"/>
        <dbReference type="Rhea" id="RHEA-COMP:11060"/>
        <dbReference type="Rhea" id="RHEA-COMP:11605"/>
        <dbReference type="ChEBI" id="CHEBI:15378"/>
        <dbReference type="ChEBI" id="CHEBI:30013"/>
        <dbReference type="ChEBI" id="CHEBI:30616"/>
        <dbReference type="ChEBI" id="CHEBI:61977"/>
        <dbReference type="ChEBI" id="CHEBI:456216"/>
        <dbReference type="EC" id="2.7.11.1"/>
    </reaction>
</comment>
<comment type="similarity">
    <text evidence="1">Belongs to the protein kinase superfamily. Ser/Thr protein kinase family.</text>
</comment>
<protein>
    <recommendedName>
        <fullName>Serine/threonine-protein kinase mos</fullName>
        <ecNumber>2.7.11.1</ecNumber>
    </recommendedName>
    <alternativeName>
        <fullName>Oocyte maturation factor mos</fullName>
    </alternativeName>
</protein>
<keyword id="KW-0067">ATP-binding</keyword>
<keyword id="KW-0418">Kinase</keyword>
<keyword id="KW-0547">Nucleotide-binding</keyword>
<keyword id="KW-0723">Serine/threonine-protein kinase</keyword>
<keyword id="KW-0808">Transferase</keyword>
<accession>Q8AX01</accession>
<reference key="1">
    <citation type="journal article" date="2002" name="C. R. Biol.">
        <title>Higher-level relationships of snakes inferred from four nuclear and mitochondrial genes.</title>
        <authorList>
            <person name="Vidal N."/>
            <person name="Hedges S.B."/>
        </authorList>
    </citation>
    <scope>NUCLEOTIDE SEQUENCE [GENOMIC DNA]</scope>
</reference>
<gene>
    <name type="primary">MOS</name>
</gene>
<proteinExistence type="inferred from homology"/>
<dbReference type="EC" id="2.7.11.1"/>
<dbReference type="EMBL" id="AF544735">
    <property type="protein sequence ID" value="AAO13458.1"/>
    <property type="molecule type" value="Genomic_DNA"/>
</dbReference>
<dbReference type="SMR" id="Q8AX01"/>
<dbReference type="GO" id="GO:0005524">
    <property type="term" value="F:ATP binding"/>
    <property type="evidence" value="ECO:0007669"/>
    <property type="project" value="UniProtKB-KW"/>
</dbReference>
<dbReference type="GO" id="GO:0106310">
    <property type="term" value="F:protein serine kinase activity"/>
    <property type="evidence" value="ECO:0007669"/>
    <property type="project" value="RHEA"/>
</dbReference>
<dbReference type="GO" id="GO:0004674">
    <property type="term" value="F:protein serine/threonine kinase activity"/>
    <property type="evidence" value="ECO:0007669"/>
    <property type="project" value="UniProtKB-KW"/>
</dbReference>
<dbReference type="FunFam" id="3.30.200.20:FF:000316">
    <property type="entry name" value="Proto-oncogene serine/threonine-protein kinase mos"/>
    <property type="match status" value="1"/>
</dbReference>
<dbReference type="Gene3D" id="3.30.200.20">
    <property type="entry name" value="Phosphorylase Kinase, domain 1"/>
    <property type="match status" value="1"/>
</dbReference>
<dbReference type="Gene3D" id="1.10.510.10">
    <property type="entry name" value="Transferase(Phosphotransferase) domain 1"/>
    <property type="match status" value="1"/>
</dbReference>
<dbReference type="InterPro" id="IPR011009">
    <property type="entry name" value="Kinase-like_dom_sf"/>
</dbReference>
<dbReference type="InterPro" id="IPR000719">
    <property type="entry name" value="Prot_kinase_dom"/>
</dbReference>
<dbReference type="InterPro" id="IPR017441">
    <property type="entry name" value="Protein_kinase_ATP_BS"/>
</dbReference>
<dbReference type="InterPro" id="IPR051681">
    <property type="entry name" value="Ser/Thr_Kinases-Pseudokinases"/>
</dbReference>
<dbReference type="PANTHER" id="PTHR44329">
    <property type="entry name" value="SERINE/THREONINE-PROTEIN KINASE TNNI3K-RELATED"/>
    <property type="match status" value="1"/>
</dbReference>
<dbReference type="PANTHER" id="PTHR44329:SF285">
    <property type="entry name" value="V-MOS MOLONEY MURINE SARCOMA VIRAL ONCO HOMOLOG"/>
    <property type="match status" value="1"/>
</dbReference>
<dbReference type="Pfam" id="PF00069">
    <property type="entry name" value="Pkinase"/>
    <property type="match status" value="1"/>
</dbReference>
<dbReference type="SMART" id="SM00220">
    <property type="entry name" value="S_TKc"/>
    <property type="match status" value="1"/>
</dbReference>
<dbReference type="SUPFAM" id="SSF56112">
    <property type="entry name" value="Protein kinase-like (PK-like)"/>
    <property type="match status" value="1"/>
</dbReference>
<dbReference type="PROSITE" id="PS00107">
    <property type="entry name" value="PROTEIN_KINASE_ATP"/>
    <property type="match status" value="1"/>
</dbReference>
<dbReference type="PROSITE" id="PS50011">
    <property type="entry name" value="PROTEIN_KINASE_DOM"/>
    <property type="match status" value="1"/>
</dbReference>
<feature type="chain" id="PRO_0000086353" description="Serine/threonine-protein kinase mos">
    <location>
        <begin position="1" status="less than"/>
        <end position="194" status="greater than"/>
    </location>
</feature>
<feature type="domain" description="Protein kinase" evidence="1">
    <location>
        <begin position="47"/>
        <end position="194" status="greater than"/>
    </location>
</feature>
<feature type="active site" description="Proton acceptor" evidence="1 2">
    <location>
        <position position="187"/>
    </location>
</feature>
<feature type="binding site" evidence="1">
    <location>
        <begin position="53"/>
        <end position="61"/>
    </location>
    <ligand>
        <name>ATP</name>
        <dbReference type="ChEBI" id="CHEBI:30616"/>
    </ligand>
</feature>
<feature type="binding site" evidence="1">
    <location>
        <position position="74"/>
    </location>
    <ligand>
        <name>ATP</name>
        <dbReference type="ChEBI" id="CHEBI:30616"/>
    </ligand>
</feature>
<feature type="non-terminal residue">
    <location>
        <position position="1"/>
    </location>
</feature>
<feature type="non-terminal residue">
    <location>
        <position position="194"/>
    </location>
</feature>
<sequence>PSVNARPCSSPLVCPAKGEKFFGVGSTSRIRRLPPHLAWCSIDWEQLCLLNLLGSGGFGSVYKATYHGATVAVKQVNRCSKNHLASRQSFWAELNVVRLDHNNVVRIVAASTCTPASQDSLGTIIMEYAGNCTLHHVIYGTGYLTGNSNDDLKCDHGFLSTAQAIIYSCDIVAGLMFLHSQLIVHLDLKPANIF</sequence>
<evidence type="ECO:0000255" key="1">
    <source>
        <dbReference type="PROSITE-ProRule" id="PRU00159"/>
    </source>
</evidence>
<evidence type="ECO:0000255" key="2">
    <source>
        <dbReference type="PROSITE-ProRule" id="PRU10027"/>
    </source>
</evidence>
<organism>
    <name type="scientific">Dendroaspis angusticeps</name>
    <name type="common">Eastern green mamba</name>
    <name type="synonym">Naja angusticeps</name>
    <dbReference type="NCBI Taxonomy" id="8618"/>
    <lineage>
        <taxon>Eukaryota</taxon>
        <taxon>Metazoa</taxon>
        <taxon>Chordata</taxon>
        <taxon>Craniata</taxon>
        <taxon>Vertebrata</taxon>
        <taxon>Euteleostomi</taxon>
        <taxon>Lepidosauria</taxon>
        <taxon>Squamata</taxon>
        <taxon>Bifurcata</taxon>
        <taxon>Unidentata</taxon>
        <taxon>Episquamata</taxon>
        <taxon>Toxicofera</taxon>
        <taxon>Serpentes</taxon>
        <taxon>Colubroidea</taxon>
        <taxon>Elapidae</taxon>
        <taxon>Elapinae</taxon>
        <taxon>Dendroaspis</taxon>
    </lineage>
</organism>
<name>MOS_DENAN</name>